<accession>Q30XZ5</accession>
<keyword id="KW-0001">2Fe-2S</keyword>
<keyword id="KW-0004">4Fe-4S</keyword>
<keyword id="KW-0093">Biotin biosynthesis</keyword>
<keyword id="KW-0408">Iron</keyword>
<keyword id="KW-0411">Iron-sulfur</keyword>
<keyword id="KW-0479">Metal-binding</keyword>
<keyword id="KW-1185">Reference proteome</keyword>
<keyword id="KW-0949">S-adenosyl-L-methionine</keyword>
<keyword id="KW-0808">Transferase</keyword>
<name>BIOB_OLEA2</name>
<organism>
    <name type="scientific">Oleidesulfovibrio alaskensis (strain ATCC BAA-1058 / DSM 17464 / G20)</name>
    <name type="common">Desulfovibrio alaskensis</name>
    <dbReference type="NCBI Taxonomy" id="207559"/>
    <lineage>
        <taxon>Bacteria</taxon>
        <taxon>Pseudomonadati</taxon>
        <taxon>Thermodesulfobacteriota</taxon>
        <taxon>Desulfovibrionia</taxon>
        <taxon>Desulfovibrionales</taxon>
        <taxon>Desulfovibrionaceae</taxon>
        <taxon>Oleidesulfovibrio</taxon>
    </lineage>
</organism>
<comment type="function">
    <text evidence="1">Catalyzes the conversion of dethiobiotin (DTB) to biotin by the insertion of a sulfur atom into dethiobiotin via a radical-based mechanism.</text>
</comment>
<comment type="catalytic activity">
    <reaction evidence="1">
        <text>(4R,5S)-dethiobiotin + (sulfur carrier)-SH + 2 reduced [2Fe-2S]-[ferredoxin] + 2 S-adenosyl-L-methionine = (sulfur carrier)-H + biotin + 2 5'-deoxyadenosine + 2 L-methionine + 2 oxidized [2Fe-2S]-[ferredoxin]</text>
        <dbReference type="Rhea" id="RHEA:22060"/>
        <dbReference type="Rhea" id="RHEA-COMP:10000"/>
        <dbReference type="Rhea" id="RHEA-COMP:10001"/>
        <dbReference type="Rhea" id="RHEA-COMP:14737"/>
        <dbReference type="Rhea" id="RHEA-COMP:14739"/>
        <dbReference type="ChEBI" id="CHEBI:17319"/>
        <dbReference type="ChEBI" id="CHEBI:29917"/>
        <dbReference type="ChEBI" id="CHEBI:33737"/>
        <dbReference type="ChEBI" id="CHEBI:33738"/>
        <dbReference type="ChEBI" id="CHEBI:57586"/>
        <dbReference type="ChEBI" id="CHEBI:57844"/>
        <dbReference type="ChEBI" id="CHEBI:59789"/>
        <dbReference type="ChEBI" id="CHEBI:64428"/>
        <dbReference type="ChEBI" id="CHEBI:149473"/>
        <dbReference type="EC" id="2.8.1.6"/>
    </reaction>
</comment>
<comment type="cofactor">
    <cofactor evidence="1">
        <name>[4Fe-4S] cluster</name>
        <dbReference type="ChEBI" id="CHEBI:49883"/>
    </cofactor>
    <text evidence="1">Binds 1 [4Fe-4S] cluster. The cluster is coordinated with 3 cysteines and an exchangeable S-adenosyl-L-methionine.</text>
</comment>
<comment type="cofactor">
    <cofactor evidence="1">
        <name>[2Fe-2S] cluster</name>
        <dbReference type="ChEBI" id="CHEBI:190135"/>
    </cofactor>
    <text evidence="1">Binds 1 [2Fe-2S] cluster. The cluster is coordinated with 3 cysteines and 1 arginine.</text>
</comment>
<comment type="pathway">
    <text evidence="1">Cofactor biosynthesis; biotin biosynthesis; biotin from 7,8-diaminononanoate: step 2/2.</text>
</comment>
<comment type="subunit">
    <text evidence="1">Homodimer.</text>
</comment>
<comment type="similarity">
    <text evidence="1">Belongs to the radical SAM superfamily. Biotin synthase family.</text>
</comment>
<gene>
    <name evidence="1" type="primary">bioB</name>
    <name type="ordered locus">Dde_2655</name>
</gene>
<protein>
    <recommendedName>
        <fullName evidence="1">Biotin synthase</fullName>
        <ecNumber evidence="1">2.8.1.6</ecNumber>
    </recommendedName>
</protein>
<sequence length="324" mass="35066">MTINPDDLCRRIMADPEACATEDEALRLLELPAEQTLPLIACAQRIRTAHAGPAFTCAIVNARSGRCPENCSFCAQSAHYATGAPEHPMLNTAALVEHALKLADAGADRFGIVTSGTRPAPRELETVCEAVVRIRARTHLSPCASLGQLSPQAAAMLRQAGLERYHHNLETARSFFASVCTTHDYDEDIYTVKLAREAGLAVCCGGILGLGESRAQRAELSGQIKRCRADSVPVNLLTPVAGTPLERMDPLPPFEALRTIAVFRFMHPQADILVAGGREHVLGEYRSWTFISGANGLMVGNYLTTAGRSTADDYTMLRHMGVLR</sequence>
<proteinExistence type="inferred from homology"/>
<dbReference type="EC" id="2.8.1.6" evidence="1"/>
<dbReference type="EMBL" id="CP000112">
    <property type="protein sequence ID" value="ABB39451.1"/>
    <property type="molecule type" value="Genomic_DNA"/>
</dbReference>
<dbReference type="RefSeq" id="WP_011368485.1">
    <property type="nucleotide sequence ID" value="NC_007519.1"/>
</dbReference>
<dbReference type="SMR" id="Q30XZ5"/>
<dbReference type="STRING" id="207559.Dde_2655"/>
<dbReference type="KEGG" id="dde:Dde_2655"/>
<dbReference type="eggNOG" id="COG0502">
    <property type="taxonomic scope" value="Bacteria"/>
</dbReference>
<dbReference type="HOGENOM" id="CLU_033172_2_1_7"/>
<dbReference type="UniPathway" id="UPA00078">
    <property type="reaction ID" value="UER00162"/>
</dbReference>
<dbReference type="Proteomes" id="UP000002710">
    <property type="component" value="Chromosome"/>
</dbReference>
<dbReference type="GO" id="GO:0051537">
    <property type="term" value="F:2 iron, 2 sulfur cluster binding"/>
    <property type="evidence" value="ECO:0007669"/>
    <property type="project" value="UniProtKB-KW"/>
</dbReference>
<dbReference type="GO" id="GO:0051539">
    <property type="term" value="F:4 iron, 4 sulfur cluster binding"/>
    <property type="evidence" value="ECO:0007669"/>
    <property type="project" value="UniProtKB-KW"/>
</dbReference>
<dbReference type="GO" id="GO:0004076">
    <property type="term" value="F:biotin synthase activity"/>
    <property type="evidence" value="ECO:0007669"/>
    <property type="project" value="UniProtKB-UniRule"/>
</dbReference>
<dbReference type="GO" id="GO:0005506">
    <property type="term" value="F:iron ion binding"/>
    <property type="evidence" value="ECO:0007669"/>
    <property type="project" value="UniProtKB-UniRule"/>
</dbReference>
<dbReference type="GO" id="GO:0009102">
    <property type="term" value="P:biotin biosynthetic process"/>
    <property type="evidence" value="ECO:0007669"/>
    <property type="project" value="UniProtKB-UniRule"/>
</dbReference>
<dbReference type="CDD" id="cd01335">
    <property type="entry name" value="Radical_SAM"/>
    <property type="match status" value="1"/>
</dbReference>
<dbReference type="Gene3D" id="3.20.20.70">
    <property type="entry name" value="Aldolase class I"/>
    <property type="match status" value="1"/>
</dbReference>
<dbReference type="HAMAP" id="MF_01694">
    <property type="entry name" value="BioB"/>
    <property type="match status" value="1"/>
</dbReference>
<dbReference type="InterPro" id="IPR013785">
    <property type="entry name" value="Aldolase_TIM"/>
</dbReference>
<dbReference type="InterPro" id="IPR010722">
    <property type="entry name" value="BATS_dom"/>
</dbReference>
<dbReference type="InterPro" id="IPR002684">
    <property type="entry name" value="Biotin_synth/BioAB"/>
</dbReference>
<dbReference type="InterPro" id="IPR024177">
    <property type="entry name" value="Biotin_synthase"/>
</dbReference>
<dbReference type="InterPro" id="IPR006638">
    <property type="entry name" value="Elp3/MiaA/NifB-like_rSAM"/>
</dbReference>
<dbReference type="InterPro" id="IPR007197">
    <property type="entry name" value="rSAM"/>
</dbReference>
<dbReference type="NCBIfam" id="TIGR00433">
    <property type="entry name" value="bioB"/>
    <property type="match status" value="1"/>
</dbReference>
<dbReference type="PANTHER" id="PTHR22976">
    <property type="entry name" value="BIOTIN SYNTHASE"/>
    <property type="match status" value="1"/>
</dbReference>
<dbReference type="PANTHER" id="PTHR22976:SF2">
    <property type="entry name" value="BIOTIN SYNTHASE, MITOCHONDRIAL"/>
    <property type="match status" value="1"/>
</dbReference>
<dbReference type="Pfam" id="PF06968">
    <property type="entry name" value="BATS"/>
    <property type="match status" value="1"/>
</dbReference>
<dbReference type="Pfam" id="PF04055">
    <property type="entry name" value="Radical_SAM"/>
    <property type="match status" value="1"/>
</dbReference>
<dbReference type="PIRSF" id="PIRSF001619">
    <property type="entry name" value="Biotin_synth"/>
    <property type="match status" value="1"/>
</dbReference>
<dbReference type="SFLD" id="SFLDG01278">
    <property type="entry name" value="biotin_synthase_like"/>
    <property type="match status" value="1"/>
</dbReference>
<dbReference type="SFLD" id="SFLDS00029">
    <property type="entry name" value="Radical_SAM"/>
    <property type="match status" value="1"/>
</dbReference>
<dbReference type="SMART" id="SM00876">
    <property type="entry name" value="BATS"/>
    <property type="match status" value="1"/>
</dbReference>
<dbReference type="SMART" id="SM00729">
    <property type="entry name" value="Elp3"/>
    <property type="match status" value="1"/>
</dbReference>
<dbReference type="SUPFAM" id="SSF102114">
    <property type="entry name" value="Radical SAM enzymes"/>
    <property type="match status" value="1"/>
</dbReference>
<dbReference type="PROSITE" id="PS51918">
    <property type="entry name" value="RADICAL_SAM"/>
    <property type="match status" value="1"/>
</dbReference>
<feature type="chain" id="PRO_0000381347" description="Biotin synthase">
    <location>
        <begin position="1"/>
        <end position="324"/>
    </location>
</feature>
<feature type="domain" description="Radical SAM core" evidence="2">
    <location>
        <begin position="50"/>
        <end position="278"/>
    </location>
</feature>
<feature type="binding site" evidence="1">
    <location>
        <position position="67"/>
    </location>
    <ligand>
        <name>[4Fe-4S] cluster</name>
        <dbReference type="ChEBI" id="CHEBI:49883"/>
        <note>4Fe-4S-S-AdoMet</note>
    </ligand>
</feature>
<feature type="binding site" evidence="1">
    <location>
        <position position="71"/>
    </location>
    <ligand>
        <name>[4Fe-4S] cluster</name>
        <dbReference type="ChEBI" id="CHEBI:49883"/>
        <note>4Fe-4S-S-AdoMet</note>
    </ligand>
</feature>
<feature type="binding site" evidence="1">
    <location>
        <position position="74"/>
    </location>
    <ligand>
        <name>[4Fe-4S] cluster</name>
        <dbReference type="ChEBI" id="CHEBI:49883"/>
        <note>4Fe-4S-S-AdoMet</note>
    </ligand>
</feature>
<feature type="binding site" evidence="1">
    <location>
        <position position="143"/>
    </location>
    <ligand>
        <name>[2Fe-2S] cluster</name>
        <dbReference type="ChEBI" id="CHEBI:190135"/>
    </ligand>
</feature>
<feature type="binding site" evidence="1">
    <location>
        <position position="203"/>
    </location>
    <ligand>
        <name>[2Fe-2S] cluster</name>
        <dbReference type="ChEBI" id="CHEBI:190135"/>
    </ligand>
</feature>
<evidence type="ECO:0000255" key="1">
    <source>
        <dbReference type="HAMAP-Rule" id="MF_01694"/>
    </source>
</evidence>
<evidence type="ECO:0000255" key="2">
    <source>
        <dbReference type="PROSITE-ProRule" id="PRU01266"/>
    </source>
</evidence>
<reference key="1">
    <citation type="journal article" date="2011" name="J. Bacteriol.">
        <title>Complete genome sequence and updated annotation of Desulfovibrio alaskensis G20.</title>
        <authorList>
            <person name="Hauser L.J."/>
            <person name="Land M.L."/>
            <person name="Brown S.D."/>
            <person name="Larimer F."/>
            <person name="Keller K.L."/>
            <person name="Rapp-Giles B.J."/>
            <person name="Price M.N."/>
            <person name="Lin M."/>
            <person name="Bruce D.C."/>
            <person name="Detter J.C."/>
            <person name="Tapia R."/>
            <person name="Han C.S."/>
            <person name="Goodwin L.A."/>
            <person name="Cheng J.F."/>
            <person name="Pitluck S."/>
            <person name="Copeland A."/>
            <person name="Lucas S."/>
            <person name="Nolan M."/>
            <person name="Lapidus A.L."/>
            <person name="Palumbo A.V."/>
            <person name="Wall J.D."/>
        </authorList>
    </citation>
    <scope>NUCLEOTIDE SEQUENCE [LARGE SCALE GENOMIC DNA]</scope>
    <source>
        <strain>ATCC BAA-1058 / DSM 17464 / G20</strain>
    </source>
</reference>